<gene>
    <name evidence="1" type="primary">rpsP</name>
    <name type="ordered locus">SSP1529</name>
</gene>
<dbReference type="EMBL" id="AP008934">
    <property type="protein sequence ID" value="BAE18674.1"/>
    <property type="molecule type" value="Genomic_DNA"/>
</dbReference>
<dbReference type="RefSeq" id="WP_002483484.1">
    <property type="nucleotide sequence ID" value="NZ_MTGA01000034.1"/>
</dbReference>
<dbReference type="SMR" id="Q49X24"/>
<dbReference type="GeneID" id="66867741"/>
<dbReference type="KEGG" id="ssp:SSP1529"/>
<dbReference type="eggNOG" id="COG0228">
    <property type="taxonomic scope" value="Bacteria"/>
</dbReference>
<dbReference type="HOGENOM" id="CLU_100590_5_0_9"/>
<dbReference type="OrthoDB" id="9807878at2"/>
<dbReference type="Proteomes" id="UP000006371">
    <property type="component" value="Chromosome"/>
</dbReference>
<dbReference type="GO" id="GO:0005737">
    <property type="term" value="C:cytoplasm"/>
    <property type="evidence" value="ECO:0007669"/>
    <property type="project" value="UniProtKB-ARBA"/>
</dbReference>
<dbReference type="GO" id="GO:0015935">
    <property type="term" value="C:small ribosomal subunit"/>
    <property type="evidence" value="ECO:0007669"/>
    <property type="project" value="TreeGrafter"/>
</dbReference>
<dbReference type="GO" id="GO:0003735">
    <property type="term" value="F:structural constituent of ribosome"/>
    <property type="evidence" value="ECO:0007669"/>
    <property type="project" value="InterPro"/>
</dbReference>
<dbReference type="GO" id="GO:0006412">
    <property type="term" value="P:translation"/>
    <property type="evidence" value="ECO:0007669"/>
    <property type="project" value="UniProtKB-UniRule"/>
</dbReference>
<dbReference type="FunFam" id="3.30.1320.10:FF:000002">
    <property type="entry name" value="30S ribosomal protein S16"/>
    <property type="match status" value="1"/>
</dbReference>
<dbReference type="Gene3D" id="3.30.1320.10">
    <property type="match status" value="1"/>
</dbReference>
<dbReference type="HAMAP" id="MF_00385">
    <property type="entry name" value="Ribosomal_bS16"/>
    <property type="match status" value="1"/>
</dbReference>
<dbReference type="InterPro" id="IPR000307">
    <property type="entry name" value="Ribosomal_bS16"/>
</dbReference>
<dbReference type="InterPro" id="IPR023803">
    <property type="entry name" value="Ribosomal_bS16_dom_sf"/>
</dbReference>
<dbReference type="NCBIfam" id="TIGR00002">
    <property type="entry name" value="S16"/>
    <property type="match status" value="1"/>
</dbReference>
<dbReference type="PANTHER" id="PTHR12919">
    <property type="entry name" value="30S RIBOSOMAL PROTEIN S16"/>
    <property type="match status" value="1"/>
</dbReference>
<dbReference type="PANTHER" id="PTHR12919:SF20">
    <property type="entry name" value="SMALL RIBOSOMAL SUBUNIT PROTEIN BS16M"/>
    <property type="match status" value="1"/>
</dbReference>
<dbReference type="Pfam" id="PF00886">
    <property type="entry name" value="Ribosomal_S16"/>
    <property type="match status" value="1"/>
</dbReference>
<dbReference type="SUPFAM" id="SSF54565">
    <property type="entry name" value="Ribosomal protein S16"/>
    <property type="match status" value="1"/>
</dbReference>
<proteinExistence type="inferred from homology"/>
<feature type="chain" id="PRO_0000167250" description="Small ribosomal subunit protein bS16">
    <location>
        <begin position="1"/>
        <end position="88"/>
    </location>
</feature>
<name>RS16_STAS1</name>
<protein>
    <recommendedName>
        <fullName evidence="1">Small ribosomal subunit protein bS16</fullName>
    </recommendedName>
    <alternativeName>
        <fullName evidence="2">30S ribosomal protein S16</fullName>
    </alternativeName>
</protein>
<comment type="similarity">
    <text evidence="1">Belongs to the bacterial ribosomal protein bS16 family.</text>
</comment>
<organism>
    <name type="scientific">Staphylococcus saprophyticus subsp. saprophyticus (strain ATCC 15305 / DSM 20229 / NCIMB 8711 / NCTC 7292 / S-41)</name>
    <dbReference type="NCBI Taxonomy" id="342451"/>
    <lineage>
        <taxon>Bacteria</taxon>
        <taxon>Bacillati</taxon>
        <taxon>Bacillota</taxon>
        <taxon>Bacilli</taxon>
        <taxon>Bacillales</taxon>
        <taxon>Staphylococcaceae</taxon>
        <taxon>Staphylococcus</taxon>
    </lineage>
</organism>
<accession>Q49X24</accession>
<evidence type="ECO:0000255" key="1">
    <source>
        <dbReference type="HAMAP-Rule" id="MF_00385"/>
    </source>
</evidence>
<evidence type="ECO:0000305" key="2"/>
<reference key="1">
    <citation type="journal article" date="2005" name="Proc. Natl. Acad. Sci. U.S.A.">
        <title>Whole genome sequence of Staphylococcus saprophyticus reveals the pathogenesis of uncomplicated urinary tract infection.</title>
        <authorList>
            <person name="Kuroda M."/>
            <person name="Yamashita A."/>
            <person name="Hirakawa H."/>
            <person name="Kumano M."/>
            <person name="Morikawa K."/>
            <person name="Higashide M."/>
            <person name="Maruyama A."/>
            <person name="Inose Y."/>
            <person name="Matoba K."/>
            <person name="Toh H."/>
            <person name="Kuhara S."/>
            <person name="Hattori M."/>
            <person name="Ohta T."/>
        </authorList>
    </citation>
    <scope>NUCLEOTIDE SEQUENCE [LARGE SCALE GENOMIC DNA]</scope>
    <source>
        <strain>ATCC 15305 / DSM 20229 / NCIMB 8711 / NCTC 7292 / S-41</strain>
    </source>
</reference>
<keyword id="KW-1185">Reference proteome</keyword>
<keyword id="KW-0687">Ribonucleoprotein</keyword>
<keyword id="KW-0689">Ribosomal protein</keyword>
<sequence length="88" mass="9973">MAVKLRLTRLGSKRNPFYRIVAADARAPRDGRNIEQIGTYNPNNVNAAEVKIDEELALKWLKNGAKPTDTVHNILSREGILKKFDDQK</sequence>